<sequence>MNLFTPLMLTAMFILLLPIIMSNTQLYKNSLYPHYVKTTISYAFIISMIPTMMFISSGQEAIISNWHWLSIQTLKLSLSFKMDYFSTIFIPVALFVTWSIMEFSMWYMHSDPYINRFFKYLLMFLITMMILVTANNLFQLFIGWEGVGIMSFLLIGWWYGRADANTAALQAILYNRIGDVGFIMAMAWFLTNSNAWDFQQIFITQHENLNIPLLGLLLAATGKSAQFGLHPWLPSAMEGPTPVSALLHSSTMVVAGVFLLIRFYPLMEQNKTMQTLTLCLGAITTLFTAICALTQNDIKKVVAFSTSSQLGLMIVTIGINQPYLAFLHICTHAFFKAMLFMCSGSIIHSLNDEQDIRKMGGLYKPMPFTTTSLIIGSLALTGMPFLTGFYSKDLIIETANTSYTNAWALLITLIATSLTAAYSTRIMFFVLLGQPRFNTLNLINENNTHLINSIKRLLIGSIFAGYLISYNIPPTTIPQMTMPYYLKLTALAVTIAGFILALELNLAAKNLKFMYPSNLFKFSNLLGYFPIVMHRLPSKMSLTMSQKSASMLLDMIWLENVLPKSISLFQMKMSTTVSNQKGLVKLYFLSFMITLALSLILLNSHE</sequence>
<comment type="function">
    <text evidence="1">Core subunit of the mitochondrial membrane respiratory chain NADH dehydrogenase (Complex I) which catalyzes electron transfer from NADH through the respiratory chain, using ubiquinone as an electron acceptor. Essential for the catalytic activity and assembly of complex I.</text>
</comment>
<comment type="catalytic activity">
    <reaction evidence="1">
        <text>a ubiquinone + NADH + 5 H(+)(in) = a ubiquinol + NAD(+) + 4 H(+)(out)</text>
        <dbReference type="Rhea" id="RHEA:29091"/>
        <dbReference type="Rhea" id="RHEA-COMP:9565"/>
        <dbReference type="Rhea" id="RHEA-COMP:9566"/>
        <dbReference type="ChEBI" id="CHEBI:15378"/>
        <dbReference type="ChEBI" id="CHEBI:16389"/>
        <dbReference type="ChEBI" id="CHEBI:17976"/>
        <dbReference type="ChEBI" id="CHEBI:57540"/>
        <dbReference type="ChEBI" id="CHEBI:57945"/>
        <dbReference type="EC" id="7.1.1.2"/>
    </reaction>
</comment>
<comment type="subunit">
    <text evidence="2">Core subunit of respiratory chain NADH dehydrogenase (Complex I) which is composed of 45 different subunits.</text>
</comment>
<comment type="subcellular location">
    <subcellularLocation>
        <location evidence="2">Mitochondrion inner membrane</location>
        <topology evidence="3">Multi-pass membrane protein</topology>
    </subcellularLocation>
</comment>
<comment type="similarity">
    <text evidence="4">Belongs to the complex I subunit 5 family.</text>
</comment>
<name>NU5M_FELCA</name>
<keyword id="KW-0249">Electron transport</keyword>
<keyword id="KW-0472">Membrane</keyword>
<keyword id="KW-0496">Mitochondrion</keyword>
<keyword id="KW-0999">Mitochondrion inner membrane</keyword>
<keyword id="KW-0520">NAD</keyword>
<keyword id="KW-1185">Reference proteome</keyword>
<keyword id="KW-0679">Respiratory chain</keyword>
<keyword id="KW-1278">Translocase</keyword>
<keyword id="KW-0812">Transmembrane</keyword>
<keyword id="KW-1133">Transmembrane helix</keyword>
<keyword id="KW-0813">Transport</keyword>
<keyword id="KW-0830">Ubiquinone</keyword>
<evidence type="ECO:0000250" key="1">
    <source>
        <dbReference type="UniProtKB" id="P03915"/>
    </source>
</evidence>
<evidence type="ECO:0000250" key="2">
    <source>
        <dbReference type="UniProtKB" id="P03920"/>
    </source>
</evidence>
<evidence type="ECO:0000255" key="3"/>
<evidence type="ECO:0000305" key="4"/>
<evidence type="ECO:0000312" key="5">
    <source>
        <dbReference type="Proteomes" id="UP000011712"/>
    </source>
</evidence>
<organism>
    <name type="scientific">Felis catus</name>
    <name type="common">Cat</name>
    <name type="synonym">Felis silvestris catus</name>
    <dbReference type="NCBI Taxonomy" id="9685"/>
    <lineage>
        <taxon>Eukaryota</taxon>
        <taxon>Metazoa</taxon>
        <taxon>Chordata</taxon>
        <taxon>Craniata</taxon>
        <taxon>Vertebrata</taxon>
        <taxon>Euteleostomi</taxon>
        <taxon>Mammalia</taxon>
        <taxon>Eutheria</taxon>
        <taxon>Laurasiatheria</taxon>
        <taxon>Carnivora</taxon>
        <taxon>Feliformia</taxon>
        <taxon>Felidae</taxon>
        <taxon>Felinae</taxon>
        <taxon>Felis</taxon>
    </lineage>
</organism>
<geneLocation type="mitochondrion"/>
<feature type="chain" id="PRO_0000118095" description="NADH-ubiquinone oxidoreductase chain 5">
    <location>
        <begin position="1"/>
        <end position="606"/>
    </location>
</feature>
<feature type="transmembrane region" description="Helical" evidence="3">
    <location>
        <begin position="1"/>
        <end position="21"/>
    </location>
</feature>
<feature type="transmembrane region" description="Helical" evidence="3">
    <location>
        <begin position="43"/>
        <end position="63"/>
    </location>
</feature>
<feature type="transmembrane region" description="Helical" evidence="3">
    <location>
        <begin position="88"/>
        <end position="108"/>
    </location>
</feature>
<feature type="transmembrane region" description="Helical" evidence="3">
    <location>
        <begin position="117"/>
        <end position="137"/>
    </location>
</feature>
<feature type="transmembrane region" description="Helical" evidence="3">
    <location>
        <begin position="140"/>
        <end position="160"/>
    </location>
</feature>
<feature type="transmembrane region" description="Helical" evidence="3">
    <location>
        <begin position="171"/>
        <end position="191"/>
    </location>
</feature>
<feature type="transmembrane region" description="Helical" evidence="3">
    <location>
        <begin position="209"/>
        <end position="229"/>
    </location>
</feature>
<feature type="transmembrane region" description="Helical" evidence="3">
    <location>
        <begin position="241"/>
        <end position="261"/>
    </location>
</feature>
<feature type="transmembrane region" description="Helical" evidence="3">
    <location>
        <begin position="273"/>
        <end position="293"/>
    </location>
</feature>
<feature type="transmembrane region" description="Helical" evidence="3">
    <location>
        <begin position="310"/>
        <end position="330"/>
    </location>
</feature>
<feature type="transmembrane region" description="Helical" evidence="3">
    <location>
        <begin position="366"/>
        <end position="386"/>
    </location>
</feature>
<feature type="transmembrane region" description="Helical" evidence="3">
    <location>
        <begin position="413"/>
        <end position="433"/>
    </location>
</feature>
<feature type="transmembrane region" description="Helical" evidence="3">
    <location>
        <begin position="457"/>
        <end position="477"/>
    </location>
</feature>
<feature type="transmembrane region" description="Helical" evidence="3">
    <location>
        <begin position="488"/>
        <end position="508"/>
    </location>
</feature>
<feature type="transmembrane region" description="Helical" evidence="3">
    <location>
        <begin position="513"/>
        <end position="533"/>
    </location>
</feature>
<feature type="transmembrane region" description="Helical" evidence="3">
    <location>
        <begin position="582"/>
        <end position="602"/>
    </location>
</feature>
<accession>P48921</accession>
<proteinExistence type="inferred from homology"/>
<dbReference type="EC" id="7.1.1.2" evidence="1"/>
<dbReference type="EMBL" id="U20753">
    <property type="protein sequence ID" value="AAC48579.1"/>
    <property type="molecule type" value="Genomic_DNA"/>
</dbReference>
<dbReference type="PIR" id="T11412">
    <property type="entry name" value="T11412"/>
</dbReference>
<dbReference type="RefSeq" id="NP_008261.1">
    <property type="nucleotide sequence ID" value="NC_001700.1"/>
</dbReference>
<dbReference type="SMR" id="P48921"/>
<dbReference type="FunCoup" id="P48921">
    <property type="interactions" value="11"/>
</dbReference>
<dbReference type="STRING" id="9685.ENSFCAP00000025719"/>
<dbReference type="PaxDb" id="9685-ENSFCAP00000025719"/>
<dbReference type="Ensembl" id="ENSFCAT00000032659.1">
    <property type="protein sequence ID" value="ENSFCAP00000025719.1"/>
    <property type="gene ID" value="ENSFCAG00000032074.1"/>
</dbReference>
<dbReference type="GeneID" id="807929"/>
<dbReference type="KEGG" id="fca:807929"/>
<dbReference type="CTD" id="4540"/>
<dbReference type="VGNC" id="VGNC:80937">
    <property type="gene designation" value="MT-ND5"/>
</dbReference>
<dbReference type="eggNOG" id="KOG4668">
    <property type="taxonomic scope" value="Eukaryota"/>
</dbReference>
<dbReference type="GeneTree" id="ENSGT00730000111303"/>
<dbReference type="HOGENOM" id="CLU_007100_6_0_1"/>
<dbReference type="InParanoid" id="P48921"/>
<dbReference type="OMA" id="GVGIMSF"/>
<dbReference type="OrthoDB" id="10069788at2759"/>
<dbReference type="Proteomes" id="UP000011712">
    <property type="component" value="Mitochondrion"/>
</dbReference>
<dbReference type="Bgee" id="ENSFCAG00000032074">
    <property type="expression patterns" value="Expressed in embryonic head and 9 other cell types or tissues"/>
</dbReference>
<dbReference type="GO" id="GO:0005743">
    <property type="term" value="C:mitochondrial inner membrane"/>
    <property type="evidence" value="ECO:0000250"/>
    <property type="project" value="UniProtKB"/>
</dbReference>
<dbReference type="GO" id="GO:0045271">
    <property type="term" value="C:respiratory chain complex I"/>
    <property type="evidence" value="ECO:0000318"/>
    <property type="project" value="GO_Central"/>
</dbReference>
<dbReference type="GO" id="GO:0008137">
    <property type="term" value="F:NADH dehydrogenase (ubiquinone) activity"/>
    <property type="evidence" value="ECO:0000250"/>
    <property type="project" value="UniProtKB"/>
</dbReference>
<dbReference type="GO" id="GO:0015990">
    <property type="term" value="P:electron transport coupled proton transport"/>
    <property type="evidence" value="ECO:0000318"/>
    <property type="project" value="GO_Central"/>
</dbReference>
<dbReference type="GO" id="GO:0006120">
    <property type="term" value="P:mitochondrial electron transport, NADH to ubiquinone"/>
    <property type="evidence" value="ECO:0000250"/>
    <property type="project" value="UniProtKB"/>
</dbReference>
<dbReference type="GO" id="GO:0032981">
    <property type="term" value="P:mitochondrial respiratory chain complex I assembly"/>
    <property type="evidence" value="ECO:0000250"/>
    <property type="project" value="UniProtKB"/>
</dbReference>
<dbReference type="InterPro" id="IPR010934">
    <property type="entry name" value="NADH_DH_su5_C"/>
</dbReference>
<dbReference type="InterPro" id="IPR018393">
    <property type="entry name" value="NADHpl_OxRdtase_5_subgr"/>
</dbReference>
<dbReference type="InterPro" id="IPR001750">
    <property type="entry name" value="ND/Mrp_TM"/>
</dbReference>
<dbReference type="InterPro" id="IPR003945">
    <property type="entry name" value="NU5C-like"/>
</dbReference>
<dbReference type="InterPro" id="IPR001516">
    <property type="entry name" value="Proton_antipo_N"/>
</dbReference>
<dbReference type="NCBIfam" id="TIGR01974">
    <property type="entry name" value="NDH_I_L"/>
    <property type="match status" value="1"/>
</dbReference>
<dbReference type="PANTHER" id="PTHR42829">
    <property type="entry name" value="NADH-UBIQUINONE OXIDOREDUCTASE CHAIN 5"/>
    <property type="match status" value="1"/>
</dbReference>
<dbReference type="PANTHER" id="PTHR42829:SF2">
    <property type="entry name" value="NADH-UBIQUINONE OXIDOREDUCTASE CHAIN 5"/>
    <property type="match status" value="1"/>
</dbReference>
<dbReference type="Pfam" id="PF06455">
    <property type="entry name" value="NADH5_C"/>
    <property type="match status" value="1"/>
</dbReference>
<dbReference type="Pfam" id="PF00361">
    <property type="entry name" value="Proton_antipo_M"/>
    <property type="match status" value="1"/>
</dbReference>
<dbReference type="Pfam" id="PF00662">
    <property type="entry name" value="Proton_antipo_N"/>
    <property type="match status" value="1"/>
</dbReference>
<dbReference type="PRINTS" id="PR01434">
    <property type="entry name" value="NADHDHGNASE5"/>
</dbReference>
<protein>
    <recommendedName>
        <fullName>NADH-ubiquinone oxidoreductase chain 5</fullName>
        <ecNumber evidence="1">7.1.1.2</ecNumber>
    </recommendedName>
    <alternativeName>
        <fullName>NADH dehydrogenase subunit 5</fullName>
    </alternativeName>
</protein>
<reference key="1">
    <citation type="journal article" date="1996" name="Genomics">
        <title>Complete nucleotide sequences of the domestic cat (Felis catus) mitochondrial genome and a transposed mtDNA tandem repeat (Numt) in the nuclear genome.</title>
        <authorList>
            <person name="Lopez J.V."/>
            <person name="Cevario S."/>
            <person name="O'Brien S.J."/>
        </authorList>
    </citation>
    <scope>NUCLEOTIDE SEQUENCE [LARGE SCALE GENOMIC DNA]</scope>
    <source>
        <strain evidence="5">Abyssinian</strain>
        <tissue>Blood</tissue>
    </source>
</reference>
<gene>
    <name type="primary">MT-ND5</name>
    <name type="synonym">MTND5</name>
    <name type="synonym">NADH5</name>
    <name type="synonym">ND5</name>
</gene>